<comment type="function">
    <text evidence="1">Part of the ABC transporter complex PhnCDE involved in phosphonates import. Responsible for energy coupling to the transport system.</text>
</comment>
<comment type="catalytic activity">
    <reaction evidence="1">
        <text>phosphonate(out) + ATP + H2O = phosphonate(in) + ADP + phosphate + H(+)</text>
        <dbReference type="Rhea" id="RHEA:18065"/>
        <dbReference type="ChEBI" id="CHEBI:15377"/>
        <dbReference type="ChEBI" id="CHEBI:15378"/>
        <dbReference type="ChEBI" id="CHEBI:16215"/>
        <dbReference type="ChEBI" id="CHEBI:30616"/>
        <dbReference type="ChEBI" id="CHEBI:43474"/>
        <dbReference type="ChEBI" id="CHEBI:456216"/>
        <dbReference type="EC" id="7.3.2.2"/>
    </reaction>
</comment>
<comment type="subunit">
    <text evidence="1">The complex is composed of two ATP-binding proteins (PhnC), two transmembrane proteins (PhnE) and a solute-binding protein (PhnD).</text>
</comment>
<comment type="subcellular location">
    <subcellularLocation>
        <location evidence="1">Cell inner membrane</location>
        <topology evidence="1">Peripheral membrane protein</topology>
    </subcellularLocation>
</comment>
<comment type="similarity">
    <text evidence="1">Belongs to the ABC transporter superfamily. Phosphonates importer (TC 3.A.1.9.1) family.</text>
</comment>
<dbReference type="EC" id="7.3.2.2" evidence="1"/>
<dbReference type="EMBL" id="CT573326">
    <property type="protein sequence ID" value="CAK13898.1"/>
    <property type="molecule type" value="Genomic_DNA"/>
</dbReference>
<dbReference type="RefSeq" id="WP_011532323.1">
    <property type="nucleotide sequence ID" value="NC_008027.1"/>
</dbReference>
<dbReference type="SMR" id="Q1IEK7"/>
<dbReference type="STRING" id="384676.PSEEN0993"/>
<dbReference type="GeneID" id="32804289"/>
<dbReference type="KEGG" id="pen:PSEEN0993"/>
<dbReference type="eggNOG" id="COG3638">
    <property type="taxonomic scope" value="Bacteria"/>
</dbReference>
<dbReference type="HOGENOM" id="CLU_000604_1_22_6"/>
<dbReference type="OrthoDB" id="9802264at2"/>
<dbReference type="Proteomes" id="UP000000658">
    <property type="component" value="Chromosome"/>
</dbReference>
<dbReference type="GO" id="GO:0005886">
    <property type="term" value="C:plasma membrane"/>
    <property type="evidence" value="ECO:0007669"/>
    <property type="project" value="UniProtKB-SubCell"/>
</dbReference>
<dbReference type="GO" id="GO:0015416">
    <property type="term" value="F:ABC-type phosphonate transporter activity"/>
    <property type="evidence" value="ECO:0007669"/>
    <property type="project" value="UniProtKB-EC"/>
</dbReference>
<dbReference type="GO" id="GO:0005524">
    <property type="term" value="F:ATP binding"/>
    <property type="evidence" value="ECO:0007669"/>
    <property type="project" value="UniProtKB-KW"/>
</dbReference>
<dbReference type="GO" id="GO:0016887">
    <property type="term" value="F:ATP hydrolysis activity"/>
    <property type="evidence" value="ECO:0007669"/>
    <property type="project" value="InterPro"/>
</dbReference>
<dbReference type="Gene3D" id="3.40.50.300">
    <property type="entry name" value="P-loop containing nucleotide triphosphate hydrolases"/>
    <property type="match status" value="1"/>
</dbReference>
<dbReference type="InterPro" id="IPR003593">
    <property type="entry name" value="AAA+_ATPase"/>
</dbReference>
<dbReference type="InterPro" id="IPR003439">
    <property type="entry name" value="ABC_transporter-like_ATP-bd"/>
</dbReference>
<dbReference type="InterPro" id="IPR017871">
    <property type="entry name" value="ABC_transporter-like_CS"/>
</dbReference>
<dbReference type="InterPro" id="IPR050086">
    <property type="entry name" value="MetN_ABC_transporter-like"/>
</dbReference>
<dbReference type="InterPro" id="IPR027417">
    <property type="entry name" value="P-loop_NTPase"/>
</dbReference>
<dbReference type="PANTHER" id="PTHR43166">
    <property type="entry name" value="AMINO ACID IMPORT ATP-BINDING PROTEIN"/>
    <property type="match status" value="1"/>
</dbReference>
<dbReference type="PANTHER" id="PTHR43166:SF6">
    <property type="entry name" value="PHOSPHONATES IMPORT ATP-BINDING PROTEIN PHNC"/>
    <property type="match status" value="1"/>
</dbReference>
<dbReference type="Pfam" id="PF00005">
    <property type="entry name" value="ABC_tran"/>
    <property type="match status" value="1"/>
</dbReference>
<dbReference type="SMART" id="SM00382">
    <property type="entry name" value="AAA"/>
    <property type="match status" value="1"/>
</dbReference>
<dbReference type="SUPFAM" id="SSF52540">
    <property type="entry name" value="P-loop containing nucleoside triphosphate hydrolases"/>
    <property type="match status" value="1"/>
</dbReference>
<dbReference type="PROSITE" id="PS00211">
    <property type="entry name" value="ABC_TRANSPORTER_1"/>
    <property type="match status" value="1"/>
</dbReference>
<dbReference type="PROSITE" id="PS50893">
    <property type="entry name" value="ABC_TRANSPORTER_2"/>
    <property type="match status" value="1"/>
</dbReference>
<dbReference type="PROSITE" id="PS51249">
    <property type="entry name" value="PHNC"/>
    <property type="match status" value="1"/>
</dbReference>
<protein>
    <recommendedName>
        <fullName evidence="1">Phosphonates import ATP-binding protein PhnC</fullName>
        <ecNumber evidence="1">7.3.2.2</ecNumber>
    </recommendedName>
</protein>
<evidence type="ECO:0000255" key="1">
    <source>
        <dbReference type="HAMAP-Rule" id="MF_01713"/>
    </source>
</evidence>
<organism>
    <name type="scientific">Pseudomonas entomophila (strain L48)</name>
    <dbReference type="NCBI Taxonomy" id="384676"/>
    <lineage>
        <taxon>Bacteria</taxon>
        <taxon>Pseudomonadati</taxon>
        <taxon>Pseudomonadota</taxon>
        <taxon>Gammaproteobacteria</taxon>
        <taxon>Pseudomonadales</taxon>
        <taxon>Pseudomonadaceae</taxon>
        <taxon>Pseudomonas</taxon>
    </lineage>
</organism>
<gene>
    <name evidence="1" type="primary">phnC</name>
    <name type="ordered locus">PSEEN0993</name>
</gene>
<reference key="1">
    <citation type="journal article" date="2006" name="Nat. Biotechnol.">
        <title>Complete genome sequence of the entomopathogenic and metabolically versatile soil bacterium Pseudomonas entomophila.</title>
        <authorList>
            <person name="Vodovar N."/>
            <person name="Vallenet D."/>
            <person name="Cruveiller S."/>
            <person name="Rouy Z."/>
            <person name="Barbe V."/>
            <person name="Acosta C."/>
            <person name="Cattolico L."/>
            <person name="Jubin C."/>
            <person name="Lajus A."/>
            <person name="Segurens B."/>
            <person name="Vacherie B."/>
            <person name="Wincker P."/>
            <person name="Weissenbach J."/>
            <person name="Lemaitre B."/>
            <person name="Medigue C."/>
            <person name="Boccard F."/>
        </authorList>
    </citation>
    <scope>NUCLEOTIDE SEQUENCE [LARGE SCALE GENOMIC DNA]</scope>
    <source>
        <strain>L48</strain>
    </source>
</reference>
<feature type="chain" id="PRO_0000274726" description="Phosphonates import ATP-binding protein PhnC">
    <location>
        <begin position="1"/>
        <end position="264"/>
    </location>
</feature>
<feature type="domain" description="ABC transporter" evidence="1">
    <location>
        <begin position="3"/>
        <end position="246"/>
    </location>
</feature>
<feature type="binding site" evidence="1">
    <location>
        <begin position="35"/>
        <end position="42"/>
    </location>
    <ligand>
        <name>ATP</name>
        <dbReference type="ChEBI" id="CHEBI:30616"/>
    </ligand>
</feature>
<keyword id="KW-0067">ATP-binding</keyword>
<keyword id="KW-0997">Cell inner membrane</keyword>
<keyword id="KW-1003">Cell membrane</keyword>
<keyword id="KW-0472">Membrane</keyword>
<keyword id="KW-0547">Nucleotide-binding</keyword>
<keyword id="KW-0918">Phosphonate transport</keyword>
<keyword id="KW-1278">Translocase</keyword>
<keyword id="KW-0813">Transport</keyword>
<name>PHNC_PSEE4</name>
<proteinExistence type="inferred from homology"/>
<accession>Q1IEK7</accession>
<sequence length="264" mass="28025">MSIRLQEAGLRHGQVQALNNVDLQIGKGERVAIIGPSGAGKSSLLHLMATAVRPSAGQLDLLGEQPWLLTSGARQRLRARVGLVHQAPPLPPRQRVVTAVLAGRLGQWGTLRGLLNLIHPSDVPGAREVLAELGMVDKLFVQCGQLSGGQLQRVGIARALYQQPEVLLTDEPVSAMDPVLADHSLALLNRHAQAHGVTLVASLHAVELALAHFPRIIGIRAGEVAFDCPAEAVTPTMLDALYANEQLGSPVVPTATVLVQIPRC</sequence>